<reference key="1">
    <citation type="journal article" date="1999" name="Nature">
        <title>Sequence and analysis of chromosome 4 of the plant Arabidopsis thaliana.</title>
        <authorList>
            <person name="Mayer K.F.X."/>
            <person name="Schueller C."/>
            <person name="Wambutt R."/>
            <person name="Murphy G."/>
            <person name="Volckaert G."/>
            <person name="Pohl T."/>
            <person name="Duesterhoeft A."/>
            <person name="Stiekema W."/>
            <person name="Entian K.-D."/>
            <person name="Terryn N."/>
            <person name="Harris B."/>
            <person name="Ansorge W."/>
            <person name="Brandt P."/>
            <person name="Grivell L.A."/>
            <person name="Rieger M."/>
            <person name="Weichselgartner M."/>
            <person name="de Simone V."/>
            <person name="Obermaier B."/>
            <person name="Mache R."/>
            <person name="Mueller M."/>
            <person name="Kreis M."/>
            <person name="Delseny M."/>
            <person name="Puigdomenech P."/>
            <person name="Watson M."/>
            <person name="Schmidtheini T."/>
            <person name="Reichert B."/>
            <person name="Portetelle D."/>
            <person name="Perez-Alonso M."/>
            <person name="Boutry M."/>
            <person name="Bancroft I."/>
            <person name="Vos P."/>
            <person name="Hoheisel J."/>
            <person name="Zimmermann W."/>
            <person name="Wedler H."/>
            <person name="Ridley P."/>
            <person name="Langham S.-A."/>
            <person name="McCullagh B."/>
            <person name="Bilham L."/>
            <person name="Robben J."/>
            <person name="van der Schueren J."/>
            <person name="Grymonprez B."/>
            <person name="Chuang Y.-J."/>
            <person name="Vandenbussche F."/>
            <person name="Braeken M."/>
            <person name="Weltjens I."/>
            <person name="Voet M."/>
            <person name="Bastiaens I."/>
            <person name="Aert R."/>
            <person name="Defoor E."/>
            <person name="Weitzenegger T."/>
            <person name="Bothe G."/>
            <person name="Ramsperger U."/>
            <person name="Hilbert H."/>
            <person name="Braun M."/>
            <person name="Holzer E."/>
            <person name="Brandt A."/>
            <person name="Peters S."/>
            <person name="van Staveren M."/>
            <person name="Dirkse W."/>
            <person name="Mooijman P."/>
            <person name="Klein Lankhorst R."/>
            <person name="Rose M."/>
            <person name="Hauf J."/>
            <person name="Koetter P."/>
            <person name="Berneiser S."/>
            <person name="Hempel S."/>
            <person name="Feldpausch M."/>
            <person name="Lamberth S."/>
            <person name="Van den Daele H."/>
            <person name="De Keyser A."/>
            <person name="Buysshaert C."/>
            <person name="Gielen J."/>
            <person name="Villarroel R."/>
            <person name="De Clercq R."/>
            <person name="van Montagu M."/>
            <person name="Rogers J."/>
            <person name="Cronin A."/>
            <person name="Quail M.A."/>
            <person name="Bray-Allen S."/>
            <person name="Clark L."/>
            <person name="Doggett J."/>
            <person name="Hall S."/>
            <person name="Kay M."/>
            <person name="Lennard N."/>
            <person name="McLay K."/>
            <person name="Mayes R."/>
            <person name="Pettett A."/>
            <person name="Rajandream M.A."/>
            <person name="Lyne M."/>
            <person name="Benes V."/>
            <person name="Rechmann S."/>
            <person name="Borkova D."/>
            <person name="Bloecker H."/>
            <person name="Scharfe M."/>
            <person name="Grimm M."/>
            <person name="Loehnert T.-H."/>
            <person name="Dose S."/>
            <person name="de Haan M."/>
            <person name="Maarse A.C."/>
            <person name="Schaefer M."/>
            <person name="Mueller-Auer S."/>
            <person name="Gabel C."/>
            <person name="Fuchs M."/>
            <person name="Fartmann B."/>
            <person name="Granderath K."/>
            <person name="Dauner D."/>
            <person name="Herzl A."/>
            <person name="Neumann S."/>
            <person name="Argiriou A."/>
            <person name="Vitale D."/>
            <person name="Liguori R."/>
            <person name="Piravandi E."/>
            <person name="Massenet O."/>
            <person name="Quigley F."/>
            <person name="Clabauld G."/>
            <person name="Muendlein A."/>
            <person name="Felber R."/>
            <person name="Schnabl S."/>
            <person name="Hiller R."/>
            <person name="Schmidt W."/>
            <person name="Lecharny A."/>
            <person name="Aubourg S."/>
            <person name="Chefdor F."/>
            <person name="Cooke R."/>
            <person name="Berger C."/>
            <person name="Monfort A."/>
            <person name="Casacuberta E."/>
            <person name="Gibbons T."/>
            <person name="Weber N."/>
            <person name="Vandenbol M."/>
            <person name="Bargues M."/>
            <person name="Terol J."/>
            <person name="Torres A."/>
            <person name="Perez-Perez A."/>
            <person name="Purnelle B."/>
            <person name="Bent E."/>
            <person name="Johnson S."/>
            <person name="Tacon D."/>
            <person name="Jesse T."/>
            <person name="Heijnen L."/>
            <person name="Schwarz S."/>
            <person name="Scholler P."/>
            <person name="Heber S."/>
            <person name="Francs P."/>
            <person name="Bielke C."/>
            <person name="Frishman D."/>
            <person name="Haase D."/>
            <person name="Lemcke K."/>
            <person name="Mewes H.-W."/>
            <person name="Stocker S."/>
            <person name="Zaccaria P."/>
            <person name="Bevan M."/>
            <person name="Wilson R.K."/>
            <person name="de la Bastide M."/>
            <person name="Habermann K."/>
            <person name="Parnell L."/>
            <person name="Dedhia N."/>
            <person name="Gnoj L."/>
            <person name="Schutz K."/>
            <person name="Huang E."/>
            <person name="Spiegel L."/>
            <person name="Sekhon M."/>
            <person name="Murray J."/>
            <person name="Sheet P."/>
            <person name="Cordes M."/>
            <person name="Abu-Threideh J."/>
            <person name="Stoneking T."/>
            <person name="Kalicki J."/>
            <person name="Graves T."/>
            <person name="Harmon G."/>
            <person name="Edwards J."/>
            <person name="Latreille P."/>
            <person name="Courtney L."/>
            <person name="Cloud J."/>
            <person name="Abbott A."/>
            <person name="Scott K."/>
            <person name="Johnson D."/>
            <person name="Minx P."/>
            <person name="Bentley D."/>
            <person name="Fulton B."/>
            <person name="Miller N."/>
            <person name="Greco T."/>
            <person name="Kemp K."/>
            <person name="Kramer J."/>
            <person name="Fulton L."/>
            <person name="Mardis E."/>
            <person name="Dante M."/>
            <person name="Pepin K."/>
            <person name="Hillier L.W."/>
            <person name="Nelson J."/>
            <person name="Spieth J."/>
            <person name="Ryan E."/>
            <person name="Andrews S."/>
            <person name="Geisel C."/>
            <person name="Layman D."/>
            <person name="Du H."/>
            <person name="Ali J."/>
            <person name="Berghoff A."/>
            <person name="Jones K."/>
            <person name="Drone K."/>
            <person name="Cotton M."/>
            <person name="Joshu C."/>
            <person name="Antonoiu B."/>
            <person name="Zidanic M."/>
            <person name="Strong C."/>
            <person name="Sun H."/>
            <person name="Lamar B."/>
            <person name="Yordan C."/>
            <person name="Ma P."/>
            <person name="Zhong J."/>
            <person name="Preston R."/>
            <person name="Vil D."/>
            <person name="Shekher M."/>
            <person name="Matero A."/>
            <person name="Shah R."/>
            <person name="Swaby I.K."/>
            <person name="O'Shaughnessy A."/>
            <person name="Rodriguez M."/>
            <person name="Hoffman J."/>
            <person name="Till S."/>
            <person name="Granat S."/>
            <person name="Shohdy N."/>
            <person name="Hasegawa A."/>
            <person name="Hameed A."/>
            <person name="Lodhi M."/>
            <person name="Johnson A."/>
            <person name="Chen E."/>
            <person name="Marra M.A."/>
            <person name="Martienssen R."/>
            <person name="McCombie W.R."/>
        </authorList>
    </citation>
    <scope>NUCLEOTIDE SEQUENCE [LARGE SCALE GENOMIC DNA]</scope>
    <source>
        <strain>cv. Columbia</strain>
    </source>
</reference>
<reference key="2">
    <citation type="journal article" date="2017" name="Plant J.">
        <title>Araport11: a complete reannotation of the Arabidopsis thaliana reference genome.</title>
        <authorList>
            <person name="Cheng C.Y."/>
            <person name="Krishnakumar V."/>
            <person name="Chan A.P."/>
            <person name="Thibaud-Nissen F."/>
            <person name="Schobel S."/>
            <person name="Town C.D."/>
        </authorList>
    </citation>
    <scope>GENOME REANNOTATION</scope>
    <source>
        <strain>cv. Columbia</strain>
    </source>
</reference>
<reference key="3">
    <citation type="journal article" date="2001" name="Nucleic Acids Res.">
        <title>The Arabidopsis thaliana genome contains at least 29 active genes encoding SET domain proteins that can be assigned to four evolutionarily conserved classes.</title>
        <authorList>
            <person name="Baumbusch L.O."/>
            <person name="Thorstensen T."/>
            <person name="Krauss V."/>
            <person name="Fischer A."/>
            <person name="Naumann K."/>
            <person name="Assalkhou R."/>
            <person name="Schulz I."/>
            <person name="Reuter G."/>
            <person name="Aalen R.B."/>
        </authorList>
    </citation>
    <scope>NUCLEOTIDE SEQUENCE [MRNA] OF 743-1027</scope>
    <scope>NOMENCLATURE</scope>
</reference>
<protein>
    <recommendedName>
        <fullName>Histone-lysine N-methyltransferase ATX4</fullName>
        <ecNumber>2.1.1.-</ecNumber>
    </recommendedName>
    <alternativeName>
        <fullName>Protein SET DOMAIN GROUP 16</fullName>
    </alternativeName>
    <alternativeName>
        <fullName>Trithorax-homolog protein 4</fullName>
        <shortName>TRX-homolog protein 4</shortName>
        <shortName>Trithorax 4</shortName>
    </alternativeName>
</protein>
<keyword id="KW-0156">Chromatin regulator</keyword>
<keyword id="KW-0479">Metal-binding</keyword>
<keyword id="KW-0489">Methyltransferase</keyword>
<keyword id="KW-0539">Nucleus</keyword>
<keyword id="KW-1185">Reference proteome</keyword>
<keyword id="KW-0677">Repeat</keyword>
<keyword id="KW-0949">S-adenosyl-L-methionine</keyword>
<keyword id="KW-0808">Transferase</keyword>
<keyword id="KW-0862">Zinc</keyword>
<keyword id="KW-0863">Zinc-finger</keyword>
<sequence length="1027" mass="116739">MIIKRKFKTQIPSLERCKLGNESRKKKRKLNLGGGGYYYPLNLLGEIAAGIVPGNGRNGFSASWCTEVTKPVEVEESLSKRRSDSGTVRDSPPAEVSRPPLVRTSRGRIQVLPSRFNDSVLDNWRKDSKSDCDLEEEEIECRNEKVVSFRVPKATNLKSKELDRKSKYSALCKEERFHEQHNDEARARVDEKLPNKKGTFGPENFYSGDLVWAKSGRNEPFWPAIVIDPMTQAPELVLRSCIPDAACVVFFGHSGNENERDYAWVRRGMIFPFVDYVARFQEQPELQGCKPGNFQMALEEAFLADQGFTEKLMHDIHLAAGNSTFDDSFYRWIQETAVSNQELNNNAPRQGLLKKHRNPLACAGCETVISFEMAKKMKDLIPGDQLLCKPCSRLTKSKHICGICKKIRNHLDNKSWVRCDGCKVRIHAECDQISDRHLKDLRETDYYCPTCRAKFNFDLSDSEKQNSKSKVAKGDGQMVLPDKVIVVCAGVEGVYFPRLHLVVCKCGSCGPKKKALSEWERHTGSKSKNWKTSVKVKSSKLALEDWMMNLAELHANATAAKVPKRPSIKQRKQRLLAFLSETYEPVNAKWTTERCAVCRWVEDWDYNKIIICNRCQIAVHQECYGARHVRDFTSWVCKACERPDIKRECCLCPVKGGALKPTDVETLWVHVTCAWFQPEVCFASEEKMEPAVGILSIPSTNFVKICVICKQIHGSCTQCCKCSTYYHAMCASRAGYRMELHCLEKNGQQITKMVSYCAYHRAPNPDNVLIIQTPSGAFSAKSLVQNKKKGGSRLISLIREDDEAPAENTITCDPFSAARCRVFKRKINSKKRIEEEAIPHHTRGPRHHASAAIQTLNTFRHVPEEPKSFSSFRERLHHLQRTEMDRVCFGRSGIHGWGLFARRNIQEGEMVLEYRGEQVRGSIADLREARYRRVGKDCYLFKISEEVVVDATDKGNIARLINHSCTPNCYARIMSVGDEESRIVLIAKANVAVGEELTYDYLFDPDEAEELKVPCLCKAPNCRKFMN</sequence>
<comment type="function">
    <text evidence="1">Histone methyltransferase.</text>
</comment>
<comment type="catalytic activity">
    <reaction>
        <text>L-lysyl-[histone] + S-adenosyl-L-methionine = N(6)-methyl-L-lysyl-[histone] + S-adenosyl-L-homocysteine + H(+)</text>
        <dbReference type="Rhea" id="RHEA:10024"/>
        <dbReference type="Rhea" id="RHEA-COMP:9845"/>
        <dbReference type="Rhea" id="RHEA-COMP:9846"/>
        <dbReference type="ChEBI" id="CHEBI:15378"/>
        <dbReference type="ChEBI" id="CHEBI:29969"/>
        <dbReference type="ChEBI" id="CHEBI:57856"/>
        <dbReference type="ChEBI" id="CHEBI:59789"/>
        <dbReference type="ChEBI" id="CHEBI:61929"/>
    </reaction>
</comment>
<comment type="subcellular location">
    <subcellularLocation>
        <location evidence="1">Nucleus</location>
    </subcellularLocation>
</comment>
<comment type="similarity">
    <text evidence="4">Belongs to the class V-like SAM-binding methyltransferase superfamily. Histone-lysine methyltransferase family. TRX/MLL subfamily.</text>
</comment>
<comment type="sequence caution" evidence="7">
    <conflict type="erroneous gene model prediction">
        <sequence resource="EMBL-CDS" id="CAB36760"/>
    </conflict>
</comment>
<comment type="sequence caution" evidence="7">
    <conflict type="erroneous gene model prediction">
        <sequence resource="EMBL-CDS" id="CAB79593"/>
    </conflict>
</comment>
<organism>
    <name type="scientific">Arabidopsis thaliana</name>
    <name type="common">Mouse-ear cress</name>
    <dbReference type="NCBI Taxonomy" id="3702"/>
    <lineage>
        <taxon>Eukaryota</taxon>
        <taxon>Viridiplantae</taxon>
        <taxon>Streptophyta</taxon>
        <taxon>Embryophyta</taxon>
        <taxon>Tracheophyta</taxon>
        <taxon>Spermatophyta</taxon>
        <taxon>Magnoliopsida</taxon>
        <taxon>eudicotyledons</taxon>
        <taxon>Gunneridae</taxon>
        <taxon>Pentapetalae</taxon>
        <taxon>rosids</taxon>
        <taxon>malvids</taxon>
        <taxon>Brassicales</taxon>
        <taxon>Brassicaceae</taxon>
        <taxon>Camelineae</taxon>
        <taxon>Arabidopsis</taxon>
    </lineage>
</organism>
<proteinExistence type="evidence at transcript level"/>
<evidence type="ECO:0000250" key="1"/>
<evidence type="ECO:0000255" key="2">
    <source>
        <dbReference type="PROSITE-ProRule" id="PRU00155"/>
    </source>
</evidence>
<evidence type="ECO:0000255" key="3">
    <source>
        <dbReference type="PROSITE-ProRule" id="PRU00162"/>
    </source>
</evidence>
<evidence type="ECO:0000255" key="4">
    <source>
        <dbReference type="PROSITE-ProRule" id="PRU00190"/>
    </source>
</evidence>
<evidence type="ECO:0000255" key="5">
    <source>
        <dbReference type="PROSITE-ProRule" id="PRU01146"/>
    </source>
</evidence>
<evidence type="ECO:0000256" key="6">
    <source>
        <dbReference type="SAM" id="MobiDB-lite"/>
    </source>
</evidence>
<evidence type="ECO:0000305" key="7"/>
<feature type="chain" id="PRO_0000233357" description="Histone-lysine N-methyltransferase ATX4">
    <location>
        <begin position="1"/>
        <end position="1027"/>
    </location>
</feature>
<feature type="domain" description="PWWP" evidence="3">
    <location>
        <begin position="207"/>
        <end position="276"/>
    </location>
</feature>
<feature type="domain" description="SET" evidence="4">
    <location>
        <begin position="885"/>
        <end position="1002"/>
    </location>
</feature>
<feature type="domain" description="Post-SET" evidence="2">
    <location>
        <begin position="1011"/>
        <end position="1027"/>
    </location>
</feature>
<feature type="zinc finger region" description="C2HC pre-PHD-type" evidence="5">
    <location>
        <begin position="646"/>
        <end position="680"/>
    </location>
</feature>
<feature type="zinc finger region" description="PHD-type 3" evidence="5">
    <location>
        <begin position="704"/>
        <end position="761"/>
    </location>
</feature>
<feature type="region of interest" description="Disordered" evidence="6">
    <location>
        <begin position="75"/>
        <end position="104"/>
    </location>
</feature>
<feature type="compositionally biased region" description="Basic and acidic residues" evidence="6">
    <location>
        <begin position="75"/>
        <end position="84"/>
    </location>
</feature>
<feature type="binding site" evidence="4">
    <location>
        <position position="895"/>
    </location>
    <ligand>
        <name>S-adenosyl-L-methionine</name>
        <dbReference type="ChEBI" id="CHEBI:59789"/>
    </ligand>
</feature>
<feature type="binding site" evidence="4">
    <location>
        <position position="939"/>
    </location>
    <ligand>
        <name>S-adenosyl-L-methionine</name>
        <dbReference type="ChEBI" id="CHEBI:59789"/>
    </ligand>
</feature>
<feature type="binding site" evidence="1">
    <location>
        <begin position="962"/>
        <end position="963"/>
    </location>
    <ligand>
        <name>S-adenosyl-L-methionine</name>
        <dbReference type="ChEBI" id="CHEBI:59789"/>
    </ligand>
</feature>
<feature type="binding site" evidence="1">
    <location>
        <position position="965"/>
    </location>
    <ligand>
        <name>Zn(2+)</name>
        <dbReference type="ChEBI" id="CHEBI:29105"/>
    </ligand>
</feature>
<feature type="binding site" evidence="1">
    <location>
        <position position="1015"/>
    </location>
    <ligand>
        <name>Zn(2+)</name>
        <dbReference type="ChEBI" id="CHEBI:29105"/>
    </ligand>
</feature>
<feature type="binding site" evidence="1">
    <location>
        <position position="1017"/>
    </location>
    <ligand>
        <name>Zn(2+)</name>
        <dbReference type="ChEBI" id="CHEBI:29105"/>
    </ligand>
</feature>
<feature type="binding site" evidence="1">
    <location>
        <position position="1022"/>
    </location>
    <ligand>
        <name>Zn(2+)</name>
        <dbReference type="ChEBI" id="CHEBI:29105"/>
    </ligand>
</feature>
<feature type="sequence conflict" description="In Ref. 3; AAL12215." evidence="7" ref="3">
    <original>K</original>
    <variation>E</variation>
    <location>
        <position position="787"/>
    </location>
</feature>
<feature type="sequence conflict" description="In Ref. 3; AAL12215." evidence="7" ref="3">
    <original>AAI</original>
    <variation>TAV</variation>
    <location>
        <begin position="851"/>
        <end position="853"/>
    </location>
</feature>
<feature type="sequence conflict" description="In Ref. 3; AAL12215." evidence="7" ref="3">
    <original>A</original>
    <variation>G</variation>
    <location>
        <position position="901"/>
    </location>
</feature>
<feature type="sequence conflict" description="In Ref. 3; AAL12215." evidence="7" ref="3">
    <original>V</original>
    <variation>L</variation>
    <location>
        <position position="947"/>
    </location>
</feature>
<dbReference type="EC" id="2.1.1.-"/>
<dbReference type="EMBL" id="AL035524">
    <property type="protein sequence ID" value="CAB36760.1"/>
    <property type="status" value="ALT_SEQ"/>
    <property type="molecule type" value="Genomic_DNA"/>
</dbReference>
<dbReference type="EMBL" id="AL161572">
    <property type="protein sequence ID" value="CAB79593.1"/>
    <property type="status" value="ALT_SEQ"/>
    <property type="molecule type" value="Genomic_DNA"/>
</dbReference>
<dbReference type="EMBL" id="CP002687">
    <property type="protein sequence ID" value="AEE85408.1"/>
    <property type="molecule type" value="Genomic_DNA"/>
</dbReference>
<dbReference type="EMBL" id="AY049754">
    <property type="protein sequence ID" value="AAL12215.1"/>
    <property type="molecule type" value="mRNA"/>
</dbReference>
<dbReference type="PIR" id="T02892">
    <property type="entry name" value="T02892"/>
</dbReference>
<dbReference type="RefSeq" id="NP_194520.3">
    <property type="nucleotide sequence ID" value="NM_118929.5"/>
</dbReference>
<dbReference type="SMR" id="Q9SUE7"/>
<dbReference type="FunCoup" id="Q9SUE7">
    <property type="interactions" value="843"/>
</dbReference>
<dbReference type="STRING" id="3702.Q9SUE7"/>
<dbReference type="iPTMnet" id="Q9SUE7"/>
<dbReference type="PaxDb" id="3702-AT4G27910.1"/>
<dbReference type="ProteomicsDB" id="240921"/>
<dbReference type="EnsemblPlants" id="AT4G27910.1">
    <property type="protein sequence ID" value="AT4G27910.1"/>
    <property type="gene ID" value="AT4G27910"/>
</dbReference>
<dbReference type="GeneID" id="828904"/>
<dbReference type="Gramene" id="AT4G27910.1">
    <property type="protein sequence ID" value="AT4G27910.1"/>
    <property type="gene ID" value="AT4G27910"/>
</dbReference>
<dbReference type="KEGG" id="ath:AT4G27910"/>
<dbReference type="Araport" id="AT4G27910"/>
<dbReference type="TAIR" id="AT4G27910">
    <property type="gene designation" value="SDG16"/>
</dbReference>
<dbReference type="eggNOG" id="KOG1080">
    <property type="taxonomic scope" value="Eukaryota"/>
</dbReference>
<dbReference type="HOGENOM" id="CLU_006335_0_0_1"/>
<dbReference type="InParanoid" id="Q9SUE7"/>
<dbReference type="OMA" id="IPHHTRG"/>
<dbReference type="PhylomeDB" id="Q9SUE7"/>
<dbReference type="PRO" id="PR:Q9SUE7"/>
<dbReference type="Proteomes" id="UP000006548">
    <property type="component" value="Chromosome 4"/>
</dbReference>
<dbReference type="ExpressionAtlas" id="Q9SUE7">
    <property type="expression patterns" value="baseline and differential"/>
</dbReference>
<dbReference type="GO" id="GO:0031011">
    <property type="term" value="C:Ino80 complex"/>
    <property type="evidence" value="ECO:0000314"/>
    <property type="project" value="TAIR"/>
</dbReference>
<dbReference type="GO" id="GO:0048188">
    <property type="term" value="C:Set1C/COMPASS complex"/>
    <property type="evidence" value="ECO:0000314"/>
    <property type="project" value="TAIR"/>
</dbReference>
<dbReference type="GO" id="GO:0042054">
    <property type="term" value="F:histone methyltransferase activity"/>
    <property type="evidence" value="ECO:0007669"/>
    <property type="project" value="RHEA"/>
</dbReference>
<dbReference type="GO" id="GO:0008270">
    <property type="term" value="F:zinc ion binding"/>
    <property type="evidence" value="ECO:0007669"/>
    <property type="project" value="UniProtKB-KW"/>
</dbReference>
<dbReference type="GO" id="GO:0032259">
    <property type="term" value="P:methylation"/>
    <property type="evidence" value="ECO:0007669"/>
    <property type="project" value="UniProtKB-KW"/>
</dbReference>
<dbReference type="CDD" id="cd15663">
    <property type="entry name" value="ePHD_ATX3_4_5_like"/>
    <property type="match status" value="1"/>
</dbReference>
<dbReference type="CDD" id="cd15495">
    <property type="entry name" value="PHD_ATX3_4_5_like"/>
    <property type="match status" value="1"/>
</dbReference>
<dbReference type="CDD" id="cd20143">
    <property type="entry name" value="PWWP_AtATX3-like"/>
    <property type="match status" value="1"/>
</dbReference>
<dbReference type="CDD" id="cd10518">
    <property type="entry name" value="SET_SETD1-like"/>
    <property type="match status" value="1"/>
</dbReference>
<dbReference type="FunFam" id="2.170.270.10:FF:000058">
    <property type="entry name" value="Histone-lysine N-methyltransferase"/>
    <property type="match status" value="1"/>
</dbReference>
<dbReference type="FunFam" id="2.30.30.140:FF:000108">
    <property type="entry name" value="Histone-lysine N-methyltransferase"/>
    <property type="match status" value="1"/>
</dbReference>
<dbReference type="FunFam" id="3.30.40.10:FF:000454">
    <property type="entry name" value="Histone-lysine N-methyltransferase"/>
    <property type="match status" value="1"/>
</dbReference>
<dbReference type="FunFam" id="3.30.40.10:FF:000464">
    <property type="entry name" value="Histone-lysine N-methyltransferase"/>
    <property type="match status" value="1"/>
</dbReference>
<dbReference type="Gene3D" id="2.30.30.140">
    <property type="match status" value="1"/>
</dbReference>
<dbReference type="Gene3D" id="2.170.270.10">
    <property type="entry name" value="SET domain"/>
    <property type="match status" value="1"/>
</dbReference>
<dbReference type="Gene3D" id="3.30.40.10">
    <property type="entry name" value="Zinc/RING finger domain, C3HC4 (zinc finger)"/>
    <property type="match status" value="3"/>
</dbReference>
<dbReference type="InterPro" id="IPR041955">
    <property type="entry name" value="ATX3/4/5_ePHD"/>
</dbReference>
<dbReference type="InterPro" id="IPR042011">
    <property type="entry name" value="ATX3/4/5_PHD"/>
</dbReference>
<dbReference type="InterPro" id="IPR034732">
    <property type="entry name" value="EPHD"/>
</dbReference>
<dbReference type="InterPro" id="IPR025780">
    <property type="entry name" value="Hist-Lys_N-MeTrfase_ATX"/>
</dbReference>
<dbReference type="InterPro" id="IPR050701">
    <property type="entry name" value="Histone_Mod_Regulator"/>
</dbReference>
<dbReference type="InterPro" id="IPR003616">
    <property type="entry name" value="Post-SET_dom"/>
</dbReference>
<dbReference type="InterPro" id="IPR000313">
    <property type="entry name" value="PWWP_dom"/>
</dbReference>
<dbReference type="InterPro" id="IPR001214">
    <property type="entry name" value="SET_dom"/>
</dbReference>
<dbReference type="InterPro" id="IPR046341">
    <property type="entry name" value="SET_dom_sf"/>
</dbReference>
<dbReference type="InterPro" id="IPR019786">
    <property type="entry name" value="Zinc_finger_PHD-type_CS"/>
</dbReference>
<dbReference type="InterPro" id="IPR011011">
    <property type="entry name" value="Znf_FYVE_PHD"/>
</dbReference>
<dbReference type="InterPro" id="IPR001965">
    <property type="entry name" value="Znf_PHD"/>
</dbReference>
<dbReference type="InterPro" id="IPR019787">
    <property type="entry name" value="Znf_PHD-finger"/>
</dbReference>
<dbReference type="InterPro" id="IPR013083">
    <property type="entry name" value="Znf_RING/FYVE/PHD"/>
</dbReference>
<dbReference type="PANTHER" id="PTHR13793:SF152">
    <property type="entry name" value="HISTONE-LYSINE N-METHYLTRANSFERASE ATX4"/>
    <property type="match status" value="1"/>
</dbReference>
<dbReference type="PANTHER" id="PTHR13793">
    <property type="entry name" value="PHD FINGER PROTEINS"/>
    <property type="match status" value="1"/>
</dbReference>
<dbReference type="Pfam" id="PF00628">
    <property type="entry name" value="PHD"/>
    <property type="match status" value="1"/>
</dbReference>
<dbReference type="Pfam" id="PF13831">
    <property type="entry name" value="PHD_2"/>
    <property type="match status" value="1"/>
</dbReference>
<dbReference type="Pfam" id="PF00855">
    <property type="entry name" value="PWWP"/>
    <property type="match status" value="1"/>
</dbReference>
<dbReference type="Pfam" id="PF00856">
    <property type="entry name" value="SET"/>
    <property type="match status" value="1"/>
</dbReference>
<dbReference type="Pfam" id="PF13832">
    <property type="entry name" value="zf-HC5HC2H_2"/>
    <property type="match status" value="1"/>
</dbReference>
<dbReference type="SMART" id="SM00249">
    <property type="entry name" value="PHD"/>
    <property type="match status" value="3"/>
</dbReference>
<dbReference type="SMART" id="SM00508">
    <property type="entry name" value="PostSET"/>
    <property type="match status" value="1"/>
</dbReference>
<dbReference type="SMART" id="SM00317">
    <property type="entry name" value="SET"/>
    <property type="match status" value="1"/>
</dbReference>
<dbReference type="SUPFAM" id="SSF57903">
    <property type="entry name" value="FYVE/PHD zinc finger"/>
    <property type="match status" value="2"/>
</dbReference>
<dbReference type="SUPFAM" id="SSF82199">
    <property type="entry name" value="SET domain"/>
    <property type="match status" value="1"/>
</dbReference>
<dbReference type="SUPFAM" id="SSF63748">
    <property type="entry name" value="Tudor/PWWP/MBT"/>
    <property type="match status" value="1"/>
</dbReference>
<dbReference type="PROSITE" id="PS51805">
    <property type="entry name" value="EPHD"/>
    <property type="match status" value="1"/>
</dbReference>
<dbReference type="PROSITE" id="PS50868">
    <property type="entry name" value="POST_SET"/>
    <property type="match status" value="1"/>
</dbReference>
<dbReference type="PROSITE" id="PS50812">
    <property type="entry name" value="PWWP"/>
    <property type="match status" value="1"/>
</dbReference>
<dbReference type="PROSITE" id="PS51566">
    <property type="entry name" value="SAM_MT43_TRX_MLL"/>
    <property type="match status" value="1"/>
</dbReference>
<dbReference type="PROSITE" id="PS50280">
    <property type="entry name" value="SET"/>
    <property type="match status" value="1"/>
</dbReference>
<dbReference type="PROSITE" id="PS01359">
    <property type="entry name" value="ZF_PHD_1"/>
    <property type="match status" value="1"/>
</dbReference>
<dbReference type="PROSITE" id="PS50016">
    <property type="entry name" value="ZF_PHD_2"/>
    <property type="match status" value="2"/>
</dbReference>
<gene>
    <name type="primary">ATX4</name>
    <name type="synonym">SDG16</name>
    <name type="synonym">SET16</name>
    <name type="synonym">TX4</name>
    <name type="ordered locus">At4g27910</name>
    <name type="ORF">T13J8.20</name>
</gene>
<name>ATX4_ARATH</name>
<accession>Q9SUE7</accession>
<accession>Q941H0</accession>